<name>RBL_BERLA</name>
<sequence>SVGFKAGVKDYKLTYYTPEYETKDTDILAAFRVTPQPGVPPEEAGAAVAAESSTGTWTTVWTDGLTSLDRYKGRCYHIEPVAGEESQFIAYVAYPLDLFEEGSVTNMFTSIVGNVFGFKALRALRLEDLRIPVSYVKTFQGPPHGIQVERDKLNKYGRPLLGCTIKPKLGLSAKNYGRAVYECLRGGLDFTKDDENVNSQPFMRWRDRFLFCAEAIYKAQAETGEIKGHYLNATAGTCEEMMKRAVFARELGVPIVMHDYLTGGFTANTTLAHYCRDNGLLLHIHRAMHAVIDRQKNHGIHFRVLAKALRMSGGDHIHSGTVVGKLEGERDITLGFVDLLRDDFIEKDRSRGIYFTQDWVSLPGVLPVASGGIHVWHMPALTEIFGDDSVLQFGGGTLGHPWGNAPGAVANRVALEACVQARNEGRDLAREGNEIIREASKWSPELAAACEVWKEIKFIFPAMDTL</sequence>
<gene>
    <name evidence="1" type="primary">rbcL</name>
</gene>
<reference key="1">
    <citation type="journal article" date="1993" name="Ann. Mo. Bot. Gard.">
        <title>A parsimony analysis of the Asteridae sensu lato based on rbcL sequences.</title>
        <authorList>
            <person name="Olmstead R.G."/>
            <person name="Bremer B."/>
            <person name="Scott K.M."/>
            <person name="Palmer J.D."/>
        </authorList>
        <dbReference type="AGRICOLA" id="IND93053816"/>
    </citation>
    <scope>NUCLEOTIDE SEQUENCE [GENOMIC DNA]</scope>
</reference>
<organism>
    <name type="scientific">Berzelia lanuginosa</name>
    <name type="common">Buttonbush</name>
    <dbReference type="NCBI Taxonomy" id="28530"/>
    <lineage>
        <taxon>Eukaryota</taxon>
        <taxon>Viridiplantae</taxon>
        <taxon>Streptophyta</taxon>
        <taxon>Embryophyta</taxon>
        <taxon>Tracheophyta</taxon>
        <taxon>Spermatophyta</taxon>
        <taxon>Magnoliopsida</taxon>
        <taxon>eudicotyledons</taxon>
        <taxon>Gunneridae</taxon>
        <taxon>Pentapetalae</taxon>
        <taxon>asterids</taxon>
        <taxon>campanulids</taxon>
        <taxon>Bruniales</taxon>
        <taxon>Bruniaceae</taxon>
        <taxon>Brunieae</taxon>
        <taxon>Berzelia</taxon>
    </lineage>
</organism>
<comment type="function">
    <text evidence="1">RuBisCO catalyzes two reactions: the carboxylation of D-ribulose 1,5-bisphosphate, the primary event in carbon dioxide fixation, as well as the oxidative fragmentation of the pentose substrate in the photorespiration process. Both reactions occur simultaneously and in competition at the same active site.</text>
</comment>
<comment type="catalytic activity">
    <reaction evidence="1">
        <text>2 (2R)-3-phosphoglycerate + 2 H(+) = D-ribulose 1,5-bisphosphate + CO2 + H2O</text>
        <dbReference type="Rhea" id="RHEA:23124"/>
        <dbReference type="ChEBI" id="CHEBI:15377"/>
        <dbReference type="ChEBI" id="CHEBI:15378"/>
        <dbReference type="ChEBI" id="CHEBI:16526"/>
        <dbReference type="ChEBI" id="CHEBI:57870"/>
        <dbReference type="ChEBI" id="CHEBI:58272"/>
        <dbReference type="EC" id="4.1.1.39"/>
    </reaction>
</comment>
<comment type="catalytic activity">
    <reaction evidence="1">
        <text>D-ribulose 1,5-bisphosphate + O2 = 2-phosphoglycolate + (2R)-3-phosphoglycerate + 2 H(+)</text>
        <dbReference type="Rhea" id="RHEA:36631"/>
        <dbReference type="ChEBI" id="CHEBI:15378"/>
        <dbReference type="ChEBI" id="CHEBI:15379"/>
        <dbReference type="ChEBI" id="CHEBI:57870"/>
        <dbReference type="ChEBI" id="CHEBI:58033"/>
        <dbReference type="ChEBI" id="CHEBI:58272"/>
    </reaction>
</comment>
<comment type="cofactor">
    <cofactor evidence="1">
        <name>Mg(2+)</name>
        <dbReference type="ChEBI" id="CHEBI:18420"/>
    </cofactor>
    <text evidence="1">Binds 1 Mg(2+) ion per subunit.</text>
</comment>
<comment type="subunit">
    <text evidence="1">Heterohexadecamer of 8 large chains and 8 small chains; disulfide-linked. The disulfide link is formed within the large subunit homodimers.</text>
</comment>
<comment type="subcellular location">
    <subcellularLocation>
        <location>Plastid</location>
        <location>Chloroplast</location>
    </subcellularLocation>
</comment>
<comment type="PTM">
    <text evidence="1">The disulfide bond which can form in the large chain dimeric partners within the hexadecamer appears to be associated with oxidative stress and protein turnover.</text>
</comment>
<comment type="miscellaneous">
    <text evidence="1">The basic functional RuBisCO is composed of a large chain homodimer in a 'head-to-tail' conformation. In form I RuBisCO this homodimer is arranged in a barrel-like tetramer with the small subunits forming a tetrameric 'cap' on each end of the 'barrel'.</text>
</comment>
<comment type="similarity">
    <text evidence="1">Belongs to the RuBisCO large chain family. Type I subfamily.</text>
</comment>
<evidence type="ECO:0000255" key="1">
    <source>
        <dbReference type="HAMAP-Rule" id="MF_01338"/>
    </source>
</evidence>
<accession>P36481</accession>
<protein>
    <recommendedName>
        <fullName evidence="1">Ribulose bisphosphate carboxylase large chain</fullName>
        <shortName evidence="1">RuBisCO large subunit</shortName>
        <ecNumber evidence="1">4.1.1.39</ecNumber>
    </recommendedName>
</protein>
<proteinExistence type="inferred from homology"/>
<dbReference type="EC" id="4.1.1.39" evidence="1"/>
<dbReference type="EMBL" id="L14391">
    <property type="protein sequence ID" value="AAA19752.1"/>
    <property type="molecule type" value="Genomic_DNA"/>
</dbReference>
<dbReference type="SMR" id="P36481"/>
<dbReference type="GO" id="GO:0009507">
    <property type="term" value="C:chloroplast"/>
    <property type="evidence" value="ECO:0007669"/>
    <property type="project" value="UniProtKB-SubCell"/>
</dbReference>
<dbReference type="GO" id="GO:0000287">
    <property type="term" value="F:magnesium ion binding"/>
    <property type="evidence" value="ECO:0007669"/>
    <property type="project" value="InterPro"/>
</dbReference>
<dbReference type="GO" id="GO:0004497">
    <property type="term" value="F:monooxygenase activity"/>
    <property type="evidence" value="ECO:0007669"/>
    <property type="project" value="UniProtKB-KW"/>
</dbReference>
<dbReference type="GO" id="GO:0016984">
    <property type="term" value="F:ribulose-bisphosphate carboxylase activity"/>
    <property type="evidence" value="ECO:0007669"/>
    <property type="project" value="UniProtKB-EC"/>
</dbReference>
<dbReference type="GO" id="GO:0009853">
    <property type="term" value="P:photorespiration"/>
    <property type="evidence" value="ECO:0007669"/>
    <property type="project" value="UniProtKB-KW"/>
</dbReference>
<dbReference type="GO" id="GO:0019253">
    <property type="term" value="P:reductive pentose-phosphate cycle"/>
    <property type="evidence" value="ECO:0007669"/>
    <property type="project" value="UniProtKB-KW"/>
</dbReference>
<dbReference type="CDD" id="cd08212">
    <property type="entry name" value="RuBisCO_large_I"/>
    <property type="match status" value="1"/>
</dbReference>
<dbReference type="FunFam" id="3.20.20.110:FF:000001">
    <property type="entry name" value="Ribulose bisphosphate carboxylase large chain"/>
    <property type="match status" value="1"/>
</dbReference>
<dbReference type="FunFam" id="3.30.70.150:FF:000001">
    <property type="entry name" value="Ribulose bisphosphate carboxylase large chain"/>
    <property type="match status" value="1"/>
</dbReference>
<dbReference type="Gene3D" id="3.20.20.110">
    <property type="entry name" value="Ribulose bisphosphate carboxylase, large subunit, C-terminal domain"/>
    <property type="match status" value="1"/>
</dbReference>
<dbReference type="Gene3D" id="3.30.70.150">
    <property type="entry name" value="RuBisCO large subunit, N-terminal domain"/>
    <property type="match status" value="1"/>
</dbReference>
<dbReference type="HAMAP" id="MF_01338">
    <property type="entry name" value="RuBisCO_L_type1"/>
    <property type="match status" value="1"/>
</dbReference>
<dbReference type="InterPro" id="IPR033966">
    <property type="entry name" value="RuBisCO"/>
</dbReference>
<dbReference type="InterPro" id="IPR020878">
    <property type="entry name" value="RuBisCo_large_chain_AS"/>
</dbReference>
<dbReference type="InterPro" id="IPR000685">
    <property type="entry name" value="RuBisCO_lsu_C"/>
</dbReference>
<dbReference type="InterPro" id="IPR036376">
    <property type="entry name" value="RuBisCO_lsu_C_sf"/>
</dbReference>
<dbReference type="InterPro" id="IPR017443">
    <property type="entry name" value="RuBisCO_lsu_fd_N"/>
</dbReference>
<dbReference type="InterPro" id="IPR036422">
    <property type="entry name" value="RuBisCO_lsu_N_sf"/>
</dbReference>
<dbReference type="InterPro" id="IPR020888">
    <property type="entry name" value="RuBisCO_lsuI"/>
</dbReference>
<dbReference type="NCBIfam" id="NF003252">
    <property type="entry name" value="PRK04208.1"/>
    <property type="match status" value="1"/>
</dbReference>
<dbReference type="PANTHER" id="PTHR42704">
    <property type="entry name" value="RIBULOSE BISPHOSPHATE CARBOXYLASE"/>
    <property type="match status" value="1"/>
</dbReference>
<dbReference type="PANTHER" id="PTHR42704:SF15">
    <property type="entry name" value="RIBULOSE BISPHOSPHATE CARBOXYLASE LARGE CHAIN"/>
    <property type="match status" value="1"/>
</dbReference>
<dbReference type="Pfam" id="PF00016">
    <property type="entry name" value="RuBisCO_large"/>
    <property type="match status" value="1"/>
</dbReference>
<dbReference type="Pfam" id="PF02788">
    <property type="entry name" value="RuBisCO_large_N"/>
    <property type="match status" value="1"/>
</dbReference>
<dbReference type="SFLD" id="SFLDG01052">
    <property type="entry name" value="RuBisCO"/>
    <property type="match status" value="1"/>
</dbReference>
<dbReference type="SFLD" id="SFLDS00014">
    <property type="entry name" value="RuBisCO"/>
    <property type="match status" value="1"/>
</dbReference>
<dbReference type="SFLD" id="SFLDG00301">
    <property type="entry name" value="RuBisCO-like_proteins"/>
    <property type="match status" value="1"/>
</dbReference>
<dbReference type="SUPFAM" id="SSF51649">
    <property type="entry name" value="RuBisCo, C-terminal domain"/>
    <property type="match status" value="1"/>
</dbReference>
<dbReference type="SUPFAM" id="SSF54966">
    <property type="entry name" value="RuBisCO, large subunit, small (N-terminal) domain"/>
    <property type="match status" value="1"/>
</dbReference>
<dbReference type="PROSITE" id="PS00157">
    <property type="entry name" value="RUBISCO_LARGE"/>
    <property type="match status" value="1"/>
</dbReference>
<feature type="chain" id="PRO_0000062375" description="Ribulose bisphosphate carboxylase large chain">
    <location>
        <begin position="1" status="less than"/>
        <end position="466"/>
    </location>
</feature>
<feature type="active site" description="Proton acceptor" evidence="1">
    <location>
        <position position="166"/>
    </location>
</feature>
<feature type="active site" description="Proton acceptor" evidence="1">
    <location>
        <position position="285"/>
    </location>
</feature>
<feature type="binding site" description="in homodimeric partner" evidence="1">
    <location>
        <position position="114"/>
    </location>
    <ligand>
        <name>substrate</name>
    </ligand>
</feature>
<feature type="binding site" evidence="1">
    <location>
        <position position="164"/>
    </location>
    <ligand>
        <name>substrate</name>
    </ligand>
</feature>
<feature type="binding site" evidence="1">
    <location>
        <position position="168"/>
    </location>
    <ligand>
        <name>substrate</name>
    </ligand>
</feature>
<feature type="binding site" description="via carbamate group" evidence="1">
    <location>
        <position position="192"/>
    </location>
    <ligand>
        <name>Mg(2+)</name>
        <dbReference type="ChEBI" id="CHEBI:18420"/>
    </ligand>
</feature>
<feature type="binding site" evidence="1">
    <location>
        <position position="194"/>
    </location>
    <ligand>
        <name>Mg(2+)</name>
        <dbReference type="ChEBI" id="CHEBI:18420"/>
    </ligand>
</feature>
<feature type="binding site" evidence="1">
    <location>
        <position position="195"/>
    </location>
    <ligand>
        <name>Mg(2+)</name>
        <dbReference type="ChEBI" id="CHEBI:18420"/>
    </ligand>
</feature>
<feature type="binding site" evidence="1">
    <location>
        <position position="286"/>
    </location>
    <ligand>
        <name>substrate</name>
    </ligand>
</feature>
<feature type="binding site" evidence="1">
    <location>
        <position position="318"/>
    </location>
    <ligand>
        <name>substrate</name>
    </ligand>
</feature>
<feature type="binding site" evidence="1">
    <location>
        <position position="370"/>
    </location>
    <ligand>
        <name>substrate</name>
    </ligand>
</feature>
<feature type="site" description="Transition state stabilizer" evidence="1">
    <location>
        <position position="325"/>
    </location>
</feature>
<feature type="modified residue" description="N6,N6,N6-trimethyllysine" evidence="1">
    <location>
        <position position="5"/>
    </location>
</feature>
<feature type="modified residue" description="N6-carboxylysine" evidence="1">
    <location>
        <position position="192"/>
    </location>
</feature>
<feature type="disulfide bond" description="Interchain; in linked form" evidence="1">
    <location>
        <position position="238"/>
    </location>
</feature>
<feature type="non-terminal residue">
    <location>
        <position position="1"/>
    </location>
</feature>
<geneLocation type="chloroplast"/>
<keyword id="KW-0113">Calvin cycle</keyword>
<keyword id="KW-0120">Carbon dioxide fixation</keyword>
<keyword id="KW-0150">Chloroplast</keyword>
<keyword id="KW-1015">Disulfide bond</keyword>
<keyword id="KW-0456">Lyase</keyword>
<keyword id="KW-0460">Magnesium</keyword>
<keyword id="KW-0479">Metal-binding</keyword>
<keyword id="KW-0488">Methylation</keyword>
<keyword id="KW-0503">Monooxygenase</keyword>
<keyword id="KW-0560">Oxidoreductase</keyword>
<keyword id="KW-0601">Photorespiration</keyword>
<keyword id="KW-0602">Photosynthesis</keyword>
<keyword id="KW-0934">Plastid</keyword>